<keyword id="KW-0548">Nucleotidyltransferase</keyword>
<keyword id="KW-0694">RNA-binding</keyword>
<keyword id="KW-0698">rRNA processing</keyword>
<keyword id="KW-0808">Transferase</keyword>
<keyword id="KW-0819">tRNA processing</keyword>
<keyword id="KW-0820">tRNA-binding</keyword>
<comment type="function">
    <text evidence="1">Phosphorolytic 3'-5' exoribonuclease that plays an important role in tRNA 3'-end maturation. Removes nucleotide residues following the 3'-CCA terminus of tRNAs; can also add nucleotides to the ends of RNA molecules by using nucleoside diphosphates as substrates, but this may not be physiologically important. Probably plays a role in initiation of 16S rRNA degradation (leading to ribosome degradation) during starvation.</text>
</comment>
<comment type="catalytic activity">
    <reaction evidence="1">
        <text>tRNA(n+1) + phosphate = tRNA(n) + a ribonucleoside 5'-diphosphate</text>
        <dbReference type="Rhea" id="RHEA:10628"/>
        <dbReference type="Rhea" id="RHEA-COMP:17343"/>
        <dbReference type="Rhea" id="RHEA-COMP:17344"/>
        <dbReference type="ChEBI" id="CHEBI:43474"/>
        <dbReference type="ChEBI" id="CHEBI:57930"/>
        <dbReference type="ChEBI" id="CHEBI:173114"/>
        <dbReference type="EC" id="2.7.7.56"/>
    </reaction>
</comment>
<comment type="subunit">
    <text evidence="1">Homohexameric ring arranged as a trimer of dimers.</text>
</comment>
<comment type="similarity">
    <text evidence="1">Belongs to the RNase PH family.</text>
</comment>
<proteinExistence type="inferred from homology"/>
<accession>B2TJ05</accession>
<name>RNPH_CLOBB</name>
<feature type="chain" id="PRO_1000129333" description="Ribonuclease PH">
    <location>
        <begin position="1"/>
        <end position="249"/>
    </location>
</feature>
<feature type="binding site" evidence="1">
    <location>
        <position position="86"/>
    </location>
    <ligand>
        <name>phosphate</name>
        <dbReference type="ChEBI" id="CHEBI:43474"/>
        <note>substrate</note>
    </ligand>
</feature>
<feature type="binding site" evidence="1">
    <location>
        <begin position="124"/>
        <end position="126"/>
    </location>
    <ligand>
        <name>phosphate</name>
        <dbReference type="ChEBI" id="CHEBI:43474"/>
        <note>substrate</note>
    </ligand>
</feature>
<gene>
    <name evidence="1" type="primary">rph</name>
    <name type="ordered locus">CLL_A0417</name>
</gene>
<protein>
    <recommendedName>
        <fullName evidence="1">Ribonuclease PH</fullName>
        <shortName evidence="1">RNase PH</shortName>
        <ecNumber evidence="1">2.7.7.56</ecNumber>
    </recommendedName>
    <alternativeName>
        <fullName evidence="1">tRNA nucleotidyltransferase</fullName>
    </alternativeName>
</protein>
<evidence type="ECO:0000255" key="1">
    <source>
        <dbReference type="HAMAP-Rule" id="MF_00564"/>
    </source>
</evidence>
<organism>
    <name type="scientific">Clostridium botulinum (strain Eklund 17B / Type B)</name>
    <dbReference type="NCBI Taxonomy" id="935198"/>
    <lineage>
        <taxon>Bacteria</taxon>
        <taxon>Bacillati</taxon>
        <taxon>Bacillota</taxon>
        <taxon>Clostridia</taxon>
        <taxon>Eubacteriales</taxon>
        <taxon>Clostridiaceae</taxon>
        <taxon>Clostridium</taxon>
    </lineage>
</organism>
<sequence length="249" mass="27853">MRIDGRKNEQIRHVKVTRHYTKYAEGSVYIEVGDTKVLCNVSIEDKVPPFMKGTGSGWITAEYNMLPRSTETRKIRDIARLKIDGRTMEIQRLIGRALRSVVDLKALGEKTLWIDCDVIQADGGTRTTAISGAFIALVDAVNKLHKIKPFKIYPIRSFVAAVSVGIVNEEKILDLCYQEDSKAKVDMNIIMTDEGSFVEVQGTGEESPYTRAELNELLDLGEKGIKQMINVQKESLKMDSLWIGTGGNN</sequence>
<dbReference type="EC" id="2.7.7.56" evidence="1"/>
<dbReference type="EMBL" id="CP001056">
    <property type="protein sequence ID" value="ACD23175.1"/>
    <property type="molecule type" value="Genomic_DNA"/>
</dbReference>
<dbReference type="SMR" id="B2TJ05"/>
<dbReference type="KEGG" id="cbk:CLL_A0417"/>
<dbReference type="PATRIC" id="fig|935198.13.peg.393"/>
<dbReference type="HOGENOM" id="CLU_050858_0_0_9"/>
<dbReference type="Proteomes" id="UP000001195">
    <property type="component" value="Chromosome"/>
</dbReference>
<dbReference type="GO" id="GO:0000175">
    <property type="term" value="F:3'-5'-RNA exonuclease activity"/>
    <property type="evidence" value="ECO:0007669"/>
    <property type="project" value="UniProtKB-UniRule"/>
</dbReference>
<dbReference type="GO" id="GO:0000049">
    <property type="term" value="F:tRNA binding"/>
    <property type="evidence" value="ECO:0007669"/>
    <property type="project" value="UniProtKB-UniRule"/>
</dbReference>
<dbReference type="GO" id="GO:0009022">
    <property type="term" value="F:tRNA nucleotidyltransferase activity"/>
    <property type="evidence" value="ECO:0007669"/>
    <property type="project" value="UniProtKB-UniRule"/>
</dbReference>
<dbReference type="GO" id="GO:0016075">
    <property type="term" value="P:rRNA catabolic process"/>
    <property type="evidence" value="ECO:0007669"/>
    <property type="project" value="UniProtKB-UniRule"/>
</dbReference>
<dbReference type="GO" id="GO:0006364">
    <property type="term" value="P:rRNA processing"/>
    <property type="evidence" value="ECO:0007669"/>
    <property type="project" value="UniProtKB-KW"/>
</dbReference>
<dbReference type="GO" id="GO:0008033">
    <property type="term" value="P:tRNA processing"/>
    <property type="evidence" value="ECO:0007669"/>
    <property type="project" value="UniProtKB-UniRule"/>
</dbReference>
<dbReference type="CDD" id="cd11362">
    <property type="entry name" value="RNase_PH_bact"/>
    <property type="match status" value="1"/>
</dbReference>
<dbReference type="FunFam" id="3.30.230.70:FF:000003">
    <property type="entry name" value="Ribonuclease PH"/>
    <property type="match status" value="1"/>
</dbReference>
<dbReference type="Gene3D" id="3.30.230.70">
    <property type="entry name" value="GHMP Kinase, N-terminal domain"/>
    <property type="match status" value="1"/>
</dbReference>
<dbReference type="HAMAP" id="MF_00564">
    <property type="entry name" value="RNase_PH"/>
    <property type="match status" value="1"/>
</dbReference>
<dbReference type="InterPro" id="IPR001247">
    <property type="entry name" value="ExoRNase_PH_dom1"/>
</dbReference>
<dbReference type="InterPro" id="IPR015847">
    <property type="entry name" value="ExoRNase_PH_dom2"/>
</dbReference>
<dbReference type="InterPro" id="IPR036345">
    <property type="entry name" value="ExoRNase_PH_dom2_sf"/>
</dbReference>
<dbReference type="InterPro" id="IPR027408">
    <property type="entry name" value="PNPase/RNase_PH_dom_sf"/>
</dbReference>
<dbReference type="InterPro" id="IPR020568">
    <property type="entry name" value="Ribosomal_Su5_D2-typ_SF"/>
</dbReference>
<dbReference type="InterPro" id="IPR050080">
    <property type="entry name" value="RNase_PH"/>
</dbReference>
<dbReference type="InterPro" id="IPR002381">
    <property type="entry name" value="RNase_PH_bac-type"/>
</dbReference>
<dbReference type="InterPro" id="IPR018336">
    <property type="entry name" value="RNase_PH_CS"/>
</dbReference>
<dbReference type="NCBIfam" id="TIGR01966">
    <property type="entry name" value="RNasePH"/>
    <property type="match status" value="1"/>
</dbReference>
<dbReference type="PANTHER" id="PTHR11953">
    <property type="entry name" value="EXOSOME COMPLEX COMPONENT"/>
    <property type="match status" value="1"/>
</dbReference>
<dbReference type="PANTHER" id="PTHR11953:SF0">
    <property type="entry name" value="EXOSOME COMPLEX COMPONENT RRP41"/>
    <property type="match status" value="1"/>
</dbReference>
<dbReference type="Pfam" id="PF01138">
    <property type="entry name" value="RNase_PH"/>
    <property type="match status" value="1"/>
</dbReference>
<dbReference type="Pfam" id="PF03725">
    <property type="entry name" value="RNase_PH_C"/>
    <property type="match status" value="1"/>
</dbReference>
<dbReference type="SUPFAM" id="SSF55666">
    <property type="entry name" value="Ribonuclease PH domain 2-like"/>
    <property type="match status" value="1"/>
</dbReference>
<dbReference type="SUPFAM" id="SSF54211">
    <property type="entry name" value="Ribosomal protein S5 domain 2-like"/>
    <property type="match status" value="1"/>
</dbReference>
<dbReference type="PROSITE" id="PS01277">
    <property type="entry name" value="RIBONUCLEASE_PH"/>
    <property type="match status" value="1"/>
</dbReference>
<reference key="1">
    <citation type="submission" date="2008-04" db="EMBL/GenBank/DDBJ databases">
        <title>Complete sequence of Clostridium botulinum strain Eklund.</title>
        <authorList>
            <person name="Brinkac L.M."/>
            <person name="Brown J.L."/>
            <person name="Bruce D."/>
            <person name="Detter C."/>
            <person name="Munk C."/>
            <person name="Smith L.A."/>
            <person name="Smith T.J."/>
            <person name="Sutton G."/>
            <person name="Brettin T.S."/>
        </authorList>
    </citation>
    <scope>NUCLEOTIDE SEQUENCE [LARGE SCALE GENOMIC DNA]</scope>
    <source>
        <strain>Eklund 17B / Type B</strain>
    </source>
</reference>